<keyword id="KW-0134">Cell wall</keyword>
<keyword id="KW-0342">GTP-binding</keyword>
<keyword id="KW-0547">Nucleotide-binding</keyword>
<keyword id="KW-1185">Reference proteome</keyword>
<keyword id="KW-0694">RNA-binding</keyword>
<keyword id="KW-0964">Secreted</keyword>
<comment type="function">
    <text evidence="1">Exhibits GTPase activity. Binds RNA but is probably not involved in ribosome assembly in mycobacteria.</text>
</comment>
<comment type="subunit">
    <text evidence="1">Monomer.</text>
</comment>
<comment type="subcellular location">
    <subcellularLocation>
        <location evidence="1">Cell envelope</location>
    </subcellularLocation>
    <subcellularLocation>
        <location evidence="1">Secreted</location>
        <location evidence="1">Cell wall</location>
    </subcellularLocation>
</comment>
<comment type="similarity">
    <text evidence="1">Belongs to the TRAFAC class TrmE-Era-EngA-EngB-Septin-like GTPase superfamily. Era GTPase family.</text>
</comment>
<feature type="chain" id="PRO_0000180032" description="GTPase Era">
    <location>
        <begin position="1"/>
        <end position="300"/>
    </location>
</feature>
<feature type="domain" description="Era-type G" evidence="2">
    <location>
        <begin position="5"/>
        <end position="176"/>
    </location>
</feature>
<feature type="domain" description="KH type-2" evidence="1">
    <location>
        <begin position="207"/>
        <end position="286"/>
    </location>
</feature>
<feature type="region of interest" description="G1" evidence="2">
    <location>
        <begin position="13"/>
        <end position="20"/>
    </location>
</feature>
<feature type="region of interest" description="G2" evidence="2">
    <location>
        <begin position="39"/>
        <end position="43"/>
    </location>
</feature>
<feature type="region of interest" description="G3" evidence="2">
    <location>
        <begin position="60"/>
        <end position="63"/>
    </location>
</feature>
<feature type="region of interest" description="G4" evidence="2">
    <location>
        <begin position="125"/>
        <end position="128"/>
    </location>
</feature>
<feature type="region of interest" description="G5" evidence="2">
    <location>
        <begin position="155"/>
        <end position="157"/>
    </location>
</feature>
<feature type="binding site" evidence="1">
    <location>
        <begin position="13"/>
        <end position="20"/>
    </location>
    <ligand>
        <name>GTP</name>
        <dbReference type="ChEBI" id="CHEBI:37565"/>
    </ligand>
</feature>
<feature type="binding site" evidence="1">
    <location>
        <begin position="60"/>
        <end position="64"/>
    </location>
    <ligand>
        <name>GTP</name>
        <dbReference type="ChEBI" id="CHEBI:37565"/>
    </ligand>
</feature>
<feature type="binding site" evidence="1">
    <location>
        <begin position="125"/>
        <end position="128"/>
    </location>
    <ligand>
        <name>GTP</name>
        <dbReference type="ChEBI" id="CHEBI:37565"/>
    </ligand>
</feature>
<organism>
    <name type="scientific">Mycobacterium bovis (strain ATCC BAA-935 / AF2122/97)</name>
    <dbReference type="NCBI Taxonomy" id="233413"/>
    <lineage>
        <taxon>Bacteria</taxon>
        <taxon>Bacillati</taxon>
        <taxon>Actinomycetota</taxon>
        <taxon>Actinomycetes</taxon>
        <taxon>Mycobacteriales</taxon>
        <taxon>Mycobacteriaceae</taxon>
        <taxon>Mycobacterium</taxon>
        <taxon>Mycobacterium tuberculosis complex</taxon>
    </lineage>
</organism>
<accession>P0A563</accession>
<accession>A0A1R3Y1E0</accession>
<accession>O05834</accession>
<accession>X2BKV8</accession>
<dbReference type="EMBL" id="LT708304">
    <property type="protein sequence ID" value="SIU00997.1"/>
    <property type="molecule type" value="Genomic_DNA"/>
</dbReference>
<dbReference type="RefSeq" id="NP_856034.1">
    <property type="nucleotide sequence ID" value="NC_002945.3"/>
</dbReference>
<dbReference type="RefSeq" id="WP_003412224.1">
    <property type="nucleotide sequence ID" value="NC_002945.4"/>
</dbReference>
<dbReference type="SMR" id="P0A563"/>
<dbReference type="GeneID" id="45426351"/>
<dbReference type="KEGG" id="mbo:BQ2027_MB2385C"/>
<dbReference type="PATRIC" id="fig|233413.5.peg.2620"/>
<dbReference type="Proteomes" id="UP000001419">
    <property type="component" value="Chromosome"/>
</dbReference>
<dbReference type="GO" id="GO:0030313">
    <property type="term" value="C:cell envelope"/>
    <property type="evidence" value="ECO:0007669"/>
    <property type="project" value="UniProtKB-SubCell"/>
</dbReference>
<dbReference type="GO" id="GO:0005829">
    <property type="term" value="C:cytosol"/>
    <property type="evidence" value="ECO:0007669"/>
    <property type="project" value="TreeGrafter"/>
</dbReference>
<dbReference type="GO" id="GO:0005576">
    <property type="term" value="C:extracellular region"/>
    <property type="evidence" value="ECO:0007669"/>
    <property type="project" value="UniProtKB-KW"/>
</dbReference>
<dbReference type="GO" id="GO:0005525">
    <property type="term" value="F:GTP binding"/>
    <property type="evidence" value="ECO:0007669"/>
    <property type="project" value="UniProtKB-UniRule"/>
</dbReference>
<dbReference type="GO" id="GO:0003924">
    <property type="term" value="F:GTPase activity"/>
    <property type="evidence" value="ECO:0007669"/>
    <property type="project" value="UniProtKB-UniRule"/>
</dbReference>
<dbReference type="GO" id="GO:0043024">
    <property type="term" value="F:ribosomal small subunit binding"/>
    <property type="evidence" value="ECO:0007669"/>
    <property type="project" value="TreeGrafter"/>
</dbReference>
<dbReference type="GO" id="GO:0019843">
    <property type="term" value="F:rRNA binding"/>
    <property type="evidence" value="ECO:0007669"/>
    <property type="project" value="TreeGrafter"/>
</dbReference>
<dbReference type="GO" id="GO:0000028">
    <property type="term" value="P:ribosomal small subunit assembly"/>
    <property type="evidence" value="ECO:0007669"/>
    <property type="project" value="TreeGrafter"/>
</dbReference>
<dbReference type="CDD" id="cd04163">
    <property type="entry name" value="Era"/>
    <property type="match status" value="1"/>
</dbReference>
<dbReference type="CDD" id="cd22534">
    <property type="entry name" value="KH-II_Era"/>
    <property type="match status" value="1"/>
</dbReference>
<dbReference type="FunFam" id="3.30.300.20:FF:000003">
    <property type="entry name" value="GTPase Era"/>
    <property type="match status" value="1"/>
</dbReference>
<dbReference type="FunFam" id="3.40.50.300:FF:000094">
    <property type="entry name" value="GTPase Era"/>
    <property type="match status" value="1"/>
</dbReference>
<dbReference type="Gene3D" id="3.30.300.20">
    <property type="match status" value="1"/>
</dbReference>
<dbReference type="Gene3D" id="3.40.50.300">
    <property type="entry name" value="P-loop containing nucleotide triphosphate hydrolases"/>
    <property type="match status" value="1"/>
</dbReference>
<dbReference type="HAMAP" id="MF_00367">
    <property type="entry name" value="GTPase_Era"/>
    <property type="match status" value="1"/>
</dbReference>
<dbReference type="InterPro" id="IPR030388">
    <property type="entry name" value="G_ERA_dom"/>
</dbReference>
<dbReference type="InterPro" id="IPR006073">
    <property type="entry name" value="GTP-bd"/>
</dbReference>
<dbReference type="InterPro" id="IPR005662">
    <property type="entry name" value="GTPase_Era-like"/>
</dbReference>
<dbReference type="InterPro" id="IPR015946">
    <property type="entry name" value="KH_dom-like_a/b"/>
</dbReference>
<dbReference type="InterPro" id="IPR004044">
    <property type="entry name" value="KH_dom_type_2"/>
</dbReference>
<dbReference type="InterPro" id="IPR009019">
    <property type="entry name" value="KH_sf_prok-type"/>
</dbReference>
<dbReference type="InterPro" id="IPR027417">
    <property type="entry name" value="P-loop_NTPase"/>
</dbReference>
<dbReference type="InterPro" id="IPR005225">
    <property type="entry name" value="Small_GTP-bd"/>
</dbReference>
<dbReference type="NCBIfam" id="TIGR00436">
    <property type="entry name" value="era"/>
    <property type="match status" value="1"/>
</dbReference>
<dbReference type="NCBIfam" id="NF000908">
    <property type="entry name" value="PRK00089.1"/>
    <property type="match status" value="1"/>
</dbReference>
<dbReference type="NCBIfam" id="TIGR00231">
    <property type="entry name" value="small_GTP"/>
    <property type="match status" value="1"/>
</dbReference>
<dbReference type="PANTHER" id="PTHR42698">
    <property type="entry name" value="GTPASE ERA"/>
    <property type="match status" value="1"/>
</dbReference>
<dbReference type="PANTHER" id="PTHR42698:SF1">
    <property type="entry name" value="GTPASE ERA, MITOCHONDRIAL"/>
    <property type="match status" value="1"/>
</dbReference>
<dbReference type="Pfam" id="PF07650">
    <property type="entry name" value="KH_2"/>
    <property type="match status" value="1"/>
</dbReference>
<dbReference type="Pfam" id="PF01926">
    <property type="entry name" value="MMR_HSR1"/>
    <property type="match status" value="1"/>
</dbReference>
<dbReference type="PRINTS" id="PR00326">
    <property type="entry name" value="GTP1OBG"/>
</dbReference>
<dbReference type="SUPFAM" id="SSF52540">
    <property type="entry name" value="P-loop containing nucleoside triphosphate hydrolases"/>
    <property type="match status" value="1"/>
</dbReference>
<dbReference type="SUPFAM" id="SSF54814">
    <property type="entry name" value="Prokaryotic type KH domain (KH-domain type II)"/>
    <property type="match status" value="1"/>
</dbReference>
<dbReference type="PROSITE" id="PS51713">
    <property type="entry name" value="G_ERA"/>
    <property type="match status" value="1"/>
</dbReference>
<dbReference type="PROSITE" id="PS50823">
    <property type="entry name" value="KH_TYPE_2"/>
    <property type="match status" value="1"/>
</dbReference>
<gene>
    <name evidence="1" type="primary">era</name>
    <name type="ordered locus">BQ2027_MB2385C</name>
</gene>
<proteinExistence type="inferred from homology"/>
<reference key="1">
    <citation type="journal article" date="2003" name="Proc. Natl. Acad. Sci. U.S.A.">
        <title>The complete genome sequence of Mycobacterium bovis.</title>
        <authorList>
            <person name="Garnier T."/>
            <person name="Eiglmeier K."/>
            <person name="Camus J.-C."/>
            <person name="Medina N."/>
            <person name="Mansoor H."/>
            <person name="Pryor M."/>
            <person name="Duthoy S."/>
            <person name="Grondin S."/>
            <person name="Lacroix C."/>
            <person name="Monsempe C."/>
            <person name="Simon S."/>
            <person name="Harris B."/>
            <person name="Atkin R."/>
            <person name="Doggett J."/>
            <person name="Mayes R."/>
            <person name="Keating L."/>
            <person name="Wheeler P.R."/>
            <person name="Parkhill J."/>
            <person name="Barrell B.G."/>
            <person name="Cole S.T."/>
            <person name="Gordon S.V."/>
            <person name="Hewinson R.G."/>
        </authorList>
    </citation>
    <scope>NUCLEOTIDE SEQUENCE [LARGE SCALE GENOMIC DNA]</scope>
    <source>
        <strain>ATCC BAA-935 / AF2122/97</strain>
    </source>
</reference>
<reference key="2">
    <citation type="journal article" date="2017" name="Genome Announc.">
        <title>Updated reference genome sequence and annotation of Mycobacterium bovis AF2122/97.</title>
        <authorList>
            <person name="Malone K.M."/>
            <person name="Farrell D."/>
            <person name="Stuber T.P."/>
            <person name="Schubert O.T."/>
            <person name="Aebersold R."/>
            <person name="Robbe-Austerman S."/>
            <person name="Gordon S.V."/>
        </authorList>
    </citation>
    <scope>NUCLEOTIDE SEQUENCE [LARGE SCALE GENOMIC DNA]</scope>
    <scope>GENOME REANNOTATION</scope>
    <source>
        <strain>ATCC BAA-935 / AF2122/97</strain>
    </source>
</reference>
<sequence>MTEFHSGFVCLVGRPNTGKSTLTNALVGAKVAITSTRPQTTRHAIRGIVHSDDFQIILVDTPGLHRPRTLLGKRLNDLVRETYAAVDVIGLCIPADEAIGPGDRWIVEQLRSTGPANTTLVVIVTKIDKVPKEKVVAQLVAVSELVTNAAEIVPVSAMTGDRVDLLIDVLAAALPAGPAYYPDGELTDEPEEVLMAELIREAALQGVRDELPHSLAVVIDEVSPREGRDDLIDVHAALYVERDSQKGIVIGKGGARLREVGTAARSQIENLLGTKVYLDLRVKVAKNWQRDPKQLGRLGF</sequence>
<protein>
    <recommendedName>
        <fullName evidence="1">GTPase Era</fullName>
    </recommendedName>
</protein>
<name>ERA_MYCBO</name>
<evidence type="ECO:0000255" key="1">
    <source>
        <dbReference type="HAMAP-Rule" id="MF_00367"/>
    </source>
</evidence>
<evidence type="ECO:0000255" key="2">
    <source>
        <dbReference type="PROSITE-ProRule" id="PRU01050"/>
    </source>
</evidence>